<protein>
    <recommendedName>
        <fullName>tRNA (guanine-N(1)-)-methyltransferase</fullName>
        <ecNumber>2.1.1.228</ecNumber>
    </recommendedName>
    <alternativeName>
        <fullName>M1G-methyltransferase</fullName>
    </alternativeName>
    <alternativeName>
        <fullName>tRNA [GM37] methyltransferase</fullName>
    </alternativeName>
</protein>
<sequence>MRFDIVTLFPDCFTSVLSSGLLGKALAKQIAQVNLVNPRDFTTDKHRKVDDEPYGGGVGMLMKPEPIFSAVESLPILERREVILMSPQGQTINQPLLRELVSNYEQLVVICGHYEGVDDRVLHLVTREVSLGDFILTGGEIPAMALINGVVRLLPGTVAKTESLTAESFEEGLLDYPQYTRPANFRGWKVPDVLLSGNHAAIAQWRYEQQIKRTSDRRPDLLEKWQQEKKQGSREQGAREAGGVGGEITTDD</sequence>
<reference key="1">
    <citation type="journal article" date="2001" name="DNA Res.">
        <title>Complete genomic sequence of the filamentous nitrogen-fixing cyanobacterium Anabaena sp. strain PCC 7120.</title>
        <authorList>
            <person name="Kaneko T."/>
            <person name="Nakamura Y."/>
            <person name="Wolk C.P."/>
            <person name="Kuritz T."/>
            <person name="Sasamoto S."/>
            <person name="Watanabe A."/>
            <person name="Iriguchi M."/>
            <person name="Ishikawa A."/>
            <person name="Kawashima K."/>
            <person name="Kimura T."/>
            <person name="Kishida Y."/>
            <person name="Kohara M."/>
            <person name="Matsumoto M."/>
            <person name="Matsuno A."/>
            <person name="Muraki A."/>
            <person name="Nakazaki N."/>
            <person name="Shimpo S."/>
            <person name="Sugimoto M."/>
            <person name="Takazawa M."/>
            <person name="Yamada M."/>
            <person name="Yasuda M."/>
            <person name="Tabata S."/>
        </authorList>
    </citation>
    <scope>NUCLEOTIDE SEQUENCE [LARGE SCALE GENOMIC DNA]</scope>
    <source>
        <strain>PCC 7120 / SAG 25.82 / UTEX 2576</strain>
    </source>
</reference>
<name>TRMD_NOSS1</name>
<gene>
    <name type="primary">trmD</name>
    <name type="ordered locus">alr3882</name>
</gene>
<keyword id="KW-0963">Cytoplasm</keyword>
<keyword id="KW-0489">Methyltransferase</keyword>
<keyword id="KW-1185">Reference proteome</keyword>
<keyword id="KW-0949">S-adenosyl-L-methionine</keyword>
<keyword id="KW-0808">Transferase</keyword>
<keyword id="KW-0819">tRNA processing</keyword>
<comment type="function">
    <text evidence="1">Specifically methylates guanosine-37 in various tRNAs.</text>
</comment>
<comment type="catalytic activity">
    <reaction>
        <text>guanosine(37) in tRNA + S-adenosyl-L-methionine = N(1)-methylguanosine(37) in tRNA + S-adenosyl-L-homocysteine + H(+)</text>
        <dbReference type="Rhea" id="RHEA:36899"/>
        <dbReference type="Rhea" id="RHEA-COMP:10145"/>
        <dbReference type="Rhea" id="RHEA-COMP:10147"/>
        <dbReference type="ChEBI" id="CHEBI:15378"/>
        <dbReference type="ChEBI" id="CHEBI:57856"/>
        <dbReference type="ChEBI" id="CHEBI:59789"/>
        <dbReference type="ChEBI" id="CHEBI:73542"/>
        <dbReference type="ChEBI" id="CHEBI:74269"/>
        <dbReference type="EC" id="2.1.1.228"/>
    </reaction>
</comment>
<comment type="subunit">
    <text evidence="1">Homodimer.</text>
</comment>
<comment type="subcellular location">
    <subcellularLocation>
        <location evidence="3">Cytoplasm</location>
    </subcellularLocation>
</comment>
<comment type="similarity">
    <text evidence="3">Belongs to the RNA methyltransferase TrmD family.</text>
</comment>
<evidence type="ECO:0000250" key="1"/>
<evidence type="ECO:0000256" key="2">
    <source>
        <dbReference type="SAM" id="MobiDB-lite"/>
    </source>
</evidence>
<evidence type="ECO:0000305" key="3"/>
<dbReference type="EC" id="2.1.1.228"/>
<dbReference type="EMBL" id="BA000019">
    <property type="protein sequence ID" value="BAB75581.1"/>
    <property type="molecule type" value="Genomic_DNA"/>
</dbReference>
<dbReference type="PIR" id="AC2291">
    <property type="entry name" value="AC2291"/>
</dbReference>
<dbReference type="RefSeq" id="WP_010998023.1">
    <property type="nucleotide sequence ID" value="NZ_RSCN01000011.1"/>
</dbReference>
<dbReference type="SMR" id="Q8YQF1"/>
<dbReference type="STRING" id="103690.gene:10495924"/>
<dbReference type="KEGG" id="ana:alr3882"/>
<dbReference type="eggNOG" id="COG0336">
    <property type="taxonomic scope" value="Bacteria"/>
</dbReference>
<dbReference type="OrthoDB" id="9807416at2"/>
<dbReference type="Proteomes" id="UP000002483">
    <property type="component" value="Chromosome"/>
</dbReference>
<dbReference type="GO" id="GO:0005829">
    <property type="term" value="C:cytosol"/>
    <property type="evidence" value="ECO:0007669"/>
    <property type="project" value="TreeGrafter"/>
</dbReference>
<dbReference type="GO" id="GO:0052906">
    <property type="term" value="F:tRNA (guanine(37)-N1)-methyltransferase activity"/>
    <property type="evidence" value="ECO:0007669"/>
    <property type="project" value="UniProtKB-UniRule"/>
</dbReference>
<dbReference type="GO" id="GO:0002939">
    <property type="term" value="P:tRNA N1-guanine methylation"/>
    <property type="evidence" value="ECO:0007669"/>
    <property type="project" value="TreeGrafter"/>
</dbReference>
<dbReference type="CDD" id="cd18080">
    <property type="entry name" value="TrmD-like"/>
    <property type="match status" value="1"/>
</dbReference>
<dbReference type="FunFam" id="1.10.1270.20:FF:000001">
    <property type="entry name" value="tRNA (guanine-N(1)-)-methyltransferase"/>
    <property type="match status" value="1"/>
</dbReference>
<dbReference type="FunFam" id="3.40.1280.10:FF:000001">
    <property type="entry name" value="tRNA (guanine-N(1)-)-methyltransferase"/>
    <property type="match status" value="1"/>
</dbReference>
<dbReference type="Gene3D" id="3.40.1280.10">
    <property type="match status" value="1"/>
</dbReference>
<dbReference type="Gene3D" id="1.10.1270.20">
    <property type="entry name" value="tRNA(m1g37)methyltransferase, domain 2"/>
    <property type="match status" value="1"/>
</dbReference>
<dbReference type="HAMAP" id="MF_00605">
    <property type="entry name" value="TrmD"/>
    <property type="match status" value="1"/>
</dbReference>
<dbReference type="InterPro" id="IPR029028">
    <property type="entry name" value="Alpha/beta_knot_MTases"/>
</dbReference>
<dbReference type="InterPro" id="IPR023148">
    <property type="entry name" value="tRNA_m1G_MeTrfase_C_sf"/>
</dbReference>
<dbReference type="InterPro" id="IPR002649">
    <property type="entry name" value="tRNA_m1G_MeTrfase_TrmD"/>
</dbReference>
<dbReference type="InterPro" id="IPR029026">
    <property type="entry name" value="tRNA_m1G_MTases_N"/>
</dbReference>
<dbReference type="InterPro" id="IPR016009">
    <property type="entry name" value="tRNA_MeTrfase_TRMD/TRM10"/>
</dbReference>
<dbReference type="NCBIfam" id="NF000648">
    <property type="entry name" value="PRK00026.1"/>
    <property type="match status" value="1"/>
</dbReference>
<dbReference type="NCBIfam" id="TIGR00088">
    <property type="entry name" value="trmD"/>
    <property type="match status" value="1"/>
</dbReference>
<dbReference type="PANTHER" id="PTHR46417">
    <property type="entry name" value="TRNA (GUANINE-N(1)-)-METHYLTRANSFERASE"/>
    <property type="match status" value="1"/>
</dbReference>
<dbReference type="PANTHER" id="PTHR46417:SF1">
    <property type="entry name" value="TRNA (GUANINE-N(1)-)-METHYLTRANSFERASE"/>
    <property type="match status" value="1"/>
</dbReference>
<dbReference type="Pfam" id="PF01746">
    <property type="entry name" value="tRNA_m1G_MT"/>
    <property type="match status" value="1"/>
</dbReference>
<dbReference type="PIRSF" id="PIRSF000386">
    <property type="entry name" value="tRNA_mtase"/>
    <property type="match status" value="1"/>
</dbReference>
<dbReference type="SUPFAM" id="SSF75217">
    <property type="entry name" value="alpha/beta knot"/>
    <property type="match status" value="1"/>
</dbReference>
<accession>Q8YQF1</accession>
<feature type="chain" id="PRO_0000060315" description="tRNA (guanine-N(1)-)-methyltransferase">
    <location>
        <begin position="1"/>
        <end position="252"/>
    </location>
</feature>
<feature type="region of interest" description="Disordered" evidence="2">
    <location>
        <begin position="215"/>
        <end position="252"/>
    </location>
</feature>
<feature type="compositionally biased region" description="Basic and acidic residues" evidence="2">
    <location>
        <begin position="215"/>
        <end position="238"/>
    </location>
</feature>
<feature type="binding site" evidence="1">
    <location>
        <position position="112"/>
    </location>
    <ligand>
        <name>S-adenosyl-L-methionine</name>
        <dbReference type="ChEBI" id="CHEBI:59789"/>
    </ligand>
</feature>
<feature type="binding site" evidence="1">
    <location>
        <begin position="131"/>
        <end position="136"/>
    </location>
    <ligand>
        <name>S-adenosyl-L-methionine</name>
        <dbReference type="ChEBI" id="CHEBI:59789"/>
    </ligand>
</feature>
<proteinExistence type="inferred from homology"/>
<organism>
    <name type="scientific">Nostoc sp. (strain PCC 7120 / SAG 25.82 / UTEX 2576)</name>
    <dbReference type="NCBI Taxonomy" id="103690"/>
    <lineage>
        <taxon>Bacteria</taxon>
        <taxon>Bacillati</taxon>
        <taxon>Cyanobacteriota</taxon>
        <taxon>Cyanophyceae</taxon>
        <taxon>Nostocales</taxon>
        <taxon>Nostocaceae</taxon>
        <taxon>Nostoc</taxon>
    </lineage>
</organism>